<evidence type="ECO:0000255" key="1">
    <source>
        <dbReference type="HAMAP-Rule" id="MF_01522"/>
    </source>
</evidence>
<proteinExistence type="inferred from homology"/>
<accession>Q135T0</accession>
<sequence>MSQHKNRVGLLVSAVGVVFGDIGTSPLYALKETFSGHHPIPVNPENIFGVLSLVFWTVMLLVTVKYVIVIMRADNHGEGGSLALLALVTELTRGRRVHYPLMMLGVIAAALFYGDSMITPAISVLSAVEGLEVVTPDLRPYVVPITAVVLTALFAIQSRGTGLVGRLFGPVMCLWFITLAVLGIVNVINAPGVLKAISPTYAFEFVFRHPLMSFYALGSVVLAVTGGEALYTDMGHFGRFPIRLAWFCLVLPALLLNYFGQGALLIHDPSAIQNPFFRMGPEWMVVPLVALATFAAVIASQAVISGAYSVARQAIQLGLLPRMTIVHTSGEEAGQIYVPFTNWTLYLAVMALVVGFQSSSNLAAAYGIAVTSTMMIDTILVSFVMALLWRWNMALVITVVGTLLAVDIAFFSANIIKVAQGGWFPLFIGFISFTVLTTWRRGRALVRKQLKKQAVPLDVVLRALGPNVSRARGTAVFLTAATDGVPPALLHNLKHNQTVHQRVVLTTVTTAETPYVPDSERVHMTDIGDGFHRLIIRYGFMQTPDVPAALVLCKQFGHEFNMMSTSFFLSRETFVPSLNPGMALWRERLFSFMTLNATRATTFFKIPTDRVVELGTQLEI</sequence>
<keyword id="KW-0997">Cell inner membrane</keyword>
<keyword id="KW-1003">Cell membrane</keyword>
<keyword id="KW-0406">Ion transport</keyword>
<keyword id="KW-0472">Membrane</keyword>
<keyword id="KW-0630">Potassium</keyword>
<keyword id="KW-0633">Potassium transport</keyword>
<keyword id="KW-0769">Symport</keyword>
<keyword id="KW-0812">Transmembrane</keyword>
<keyword id="KW-1133">Transmembrane helix</keyword>
<keyword id="KW-0813">Transport</keyword>
<name>KUP2_RHOPS</name>
<comment type="function">
    <text evidence="1">Transport of potassium into the cell. Likely operates as a K(+):H(+) symporter.</text>
</comment>
<comment type="catalytic activity">
    <reaction evidence="1">
        <text>K(+)(in) + H(+)(in) = K(+)(out) + H(+)(out)</text>
        <dbReference type="Rhea" id="RHEA:28490"/>
        <dbReference type="ChEBI" id="CHEBI:15378"/>
        <dbReference type="ChEBI" id="CHEBI:29103"/>
    </reaction>
    <physiologicalReaction direction="right-to-left" evidence="1">
        <dbReference type="Rhea" id="RHEA:28492"/>
    </physiologicalReaction>
</comment>
<comment type="subcellular location">
    <subcellularLocation>
        <location evidence="1">Cell inner membrane</location>
        <topology evidence="1">Multi-pass membrane protein</topology>
    </subcellularLocation>
</comment>
<comment type="similarity">
    <text evidence="1">Belongs to the HAK/KUP transporter (TC 2.A.72) family.</text>
</comment>
<reference key="1">
    <citation type="submission" date="2006-03" db="EMBL/GenBank/DDBJ databases">
        <title>Complete sequence of Rhodopseudomonas palustris BisB5.</title>
        <authorList>
            <consortium name="US DOE Joint Genome Institute"/>
            <person name="Copeland A."/>
            <person name="Lucas S."/>
            <person name="Lapidus A."/>
            <person name="Barry K."/>
            <person name="Detter J.C."/>
            <person name="Glavina del Rio T."/>
            <person name="Hammon N."/>
            <person name="Israni S."/>
            <person name="Dalin E."/>
            <person name="Tice H."/>
            <person name="Pitluck S."/>
            <person name="Chain P."/>
            <person name="Malfatti S."/>
            <person name="Shin M."/>
            <person name="Vergez L."/>
            <person name="Schmutz J."/>
            <person name="Larimer F."/>
            <person name="Land M."/>
            <person name="Hauser L."/>
            <person name="Pelletier D.A."/>
            <person name="Kyrpides N."/>
            <person name="Lykidis A."/>
            <person name="Oda Y."/>
            <person name="Harwood C.S."/>
            <person name="Richardson P."/>
        </authorList>
    </citation>
    <scope>NUCLEOTIDE SEQUENCE [LARGE SCALE GENOMIC DNA]</scope>
    <source>
        <strain>BisB5</strain>
    </source>
</reference>
<organism>
    <name type="scientific">Rhodopseudomonas palustris (strain BisB5)</name>
    <dbReference type="NCBI Taxonomy" id="316057"/>
    <lineage>
        <taxon>Bacteria</taxon>
        <taxon>Pseudomonadati</taxon>
        <taxon>Pseudomonadota</taxon>
        <taxon>Alphaproteobacteria</taxon>
        <taxon>Hyphomicrobiales</taxon>
        <taxon>Nitrobacteraceae</taxon>
        <taxon>Rhodopseudomonas</taxon>
    </lineage>
</organism>
<gene>
    <name evidence="1" type="primary">kup2</name>
    <name type="ordered locus">RPD_2932</name>
</gene>
<protein>
    <recommendedName>
        <fullName evidence="1">Probable potassium transport system protein Kup 2</fullName>
    </recommendedName>
</protein>
<feature type="chain" id="PRO_5000112179" description="Probable potassium transport system protein Kup 2">
    <location>
        <begin position="1"/>
        <end position="620"/>
    </location>
</feature>
<feature type="transmembrane region" description="Helical" evidence="1">
    <location>
        <begin position="10"/>
        <end position="30"/>
    </location>
</feature>
<feature type="transmembrane region" description="Helical" evidence="1">
    <location>
        <begin position="50"/>
        <end position="70"/>
    </location>
</feature>
<feature type="transmembrane region" description="Helical" evidence="1">
    <location>
        <begin position="102"/>
        <end position="122"/>
    </location>
</feature>
<feature type="transmembrane region" description="Helical" evidence="1">
    <location>
        <begin position="136"/>
        <end position="156"/>
    </location>
</feature>
<feature type="transmembrane region" description="Helical" evidence="1">
    <location>
        <begin position="168"/>
        <end position="188"/>
    </location>
</feature>
<feature type="transmembrane region" description="Helical" evidence="1">
    <location>
        <begin position="211"/>
        <end position="231"/>
    </location>
</feature>
<feature type="transmembrane region" description="Helical" evidence="1">
    <location>
        <begin position="246"/>
        <end position="266"/>
    </location>
</feature>
<feature type="transmembrane region" description="Helical" evidence="1">
    <location>
        <begin position="284"/>
        <end position="304"/>
    </location>
</feature>
<feature type="transmembrane region" description="Helical" evidence="1">
    <location>
        <begin position="336"/>
        <end position="356"/>
    </location>
</feature>
<feature type="transmembrane region" description="Helical" evidence="1">
    <location>
        <begin position="368"/>
        <end position="388"/>
    </location>
</feature>
<feature type="transmembrane region" description="Helical" evidence="1">
    <location>
        <begin position="393"/>
        <end position="413"/>
    </location>
</feature>
<feature type="transmembrane region" description="Helical" evidence="1">
    <location>
        <begin position="415"/>
        <end position="435"/>
    </location>
</feature>
<dbReference type="EMBL" id="CP000283">
    <property type="protein sequence ID" value="ABE40159.1"/>
    <property type="molecule type" value="Genomic_DNA"/>
</dbReference>
<dbReference type="KEGG" id="rpd:RPD_2932"/>
<dbReference type="eggNOG" id="COG3158">
    <property type="taxonomic scope" value="Bacteria"/>
</dbReference>
<dbReference type="HOGENOM" id="CLU_008142_4_2_5"/>
<dbReference type="BioCyc" id="RPAL316057:RPD_RS14735-MONOMER"/>
<dbReference type="Proteomes" id="UP000001818">
    <property type="component" value="Chromosome"/>
</dbReference>
<dbReference type="GO" id="GO:0005886">
    <property type="term" value="C:plasma membrane"/>
    <property type="evidence" value="ECO:0007669"/>
    <property type="project" value="UniProtKB-SubCell"/>
</dbReference>
<dbReference type="GO" id="GO:0015079">
    <property type="term" value="F:potassium ion transmembrane transporter activity"/>
    <property type="evidence" value="ECO:0007669"/>
    <property type="project" value="UniProtKB-UniRule"/>
</dbReference>
<dbReference type="GO" id="GO:0015293">
    <property type="term" value="F:symporter activity"/>
    <property type="evidence" value="ECO:0007669"/>
    <property type="project" value="UniProtKB-UniRule"/>
</dbReference>
<dbReference type="HAMAP" id="MF_01522">
    <property type="entry name" value="Kup"/>
    <property type="match status" value="1"/>
</dbReference>
<dbReference type="InterPro" id="IPR003855">
    <property type="entry name" value="K+_transporter"/>
</dbReference>
<dbReference type="InterPro" id="IPR053952">
    <property type="entry name" value="K_trans_C"/>
</dbReference>
<dbReference type="InterPro" id="IPR053951">
    <property type="entry name" value="K_trans_N"/>
</dbReference>
<dbReference type="InterPro" id="IPR023051">
    <property type="entry name" value="Kup"/>
</dbReference>
<dbReference type="PANTHER" id="PTHR30540:SF79">
    <property type="entry name" value="LOW AFFINITY POTASSIUM TRANSPORT SYSTEM PROTEIN KUP"/>
    <property type="match status" value="1"/>
</dbReference>
<dbReference type="PANTHER" id="PTHR30540">
    <property type="entry name" value="OSMOTIC STRESS POTASSIUM TRANSPORTER"/>
    <property type="match status" value="1"/>
</dbReference>
<dbReference type="Pfam" id="PF02705">
    <property type="entry name" value="K_trans"/>
    <property type="match status" value="1"/>
</dbReference>
<dbReference type="Pfam" id="PF22776">
    <property type="entry name" value="K_trans_C"/>
    <property type="match status" value="1"/>
</dbReference>